<keyword id="KW-0010">Activator</keyword>
<keyword id="KW-0963">Cytoplasm</keyword>
<keyword id="KW-0238">DNA-binding</keyword>
<keyword id="KW-0479">Metal-binding</keyword>
<keyword id="KW-0539">Nucleus</keyword>
<keyword id="KW-0597">Phosphoprotein</keyword>
<keyword id="KW-0675">Receptor</keyword>
<keyword id="KW-1185">Reference proteome</keyword>
<keyword id="KW-0804">Transcription</keyword>
<keyword id="KW-0805">Transcription regulation</keyword>
<keyword id="KW-0832">Ubl conjugation</keyword>
<keyword id="KW-0862">Zinc</keyword>
<keyword id="KW-0863">Zinc-finger</keyword>
<dbReference type="EMBL" id="U11685">
    <property type="protein sequence ID" value="AAA53633.1"/>
    <property type="molecule type" value="mRNA"/>
</dbReference>
<dbReference type="PIR" id="A56043">
    <property type="entry name" value="A56043"/>
</dbReference>
<dbReference type="SMR" id="Q62685"/>
<dbReference type="FunCoup" id="Q62685">
    <property type="interactions" value="417"/>
</dbReference>
<dbReference type="STRING" id="10116.ENSRNOP00000018154"/>
<dbReference type="ChEMBL" id="CHEMBL4523336"/>
<dbReference type="iPTMnet" id="Q62685"/>
<dbReference type="PhosphoSitePlus" id="Q62685"/>
<dbReference type="PaxDb" id="10116-ENSRNOP00000018154"/>
<dbReference type="UCSC" id="RGD:61909">
    <property type="organism name" value="rat"/>
</dbReference>
<dbReference type="AGR" id="RGD:61909"/>
<dbReference type="RGD" id="61909">
    <property type="gene designation" value="Nr1h3"/>
</dbReference>
<dbReference type="eggNOG" id="KOG3575">
    <property type="taxonomic scope" value="Eukaryota"/>
</dbReference>
<dbReference type="InParanoid" id="Q62685"/>
<dbReference type="PhylomeDB" id="Q62685"/>
<dbReference type="Reactome" id="R-RNO-383280">
    <property type="pathway name" value="Nuclear Receptor transcription pathway"/>
</dbReference>
<dbReference type="Reactome" id="R-RNO-4090294">
    <property type="pathway name" value="SUMOylation of intracellular receptors"/>
</dbReference>
<dbReference type="Reactome" id="R-RNO-8866427">
    <property type="pathway name" value="VLDLR internalisation and degradation"/>
</dbReference>
<dbReference type="Reactome" id="R-RNO-9029569">
    <property type="pathway name" value="NR1H3 &amp; NR1H2 regulate gene expression linked to cholesterol transport and efflux"/>
</dbReference>
<dbReference type="Reactome" id="R-RNO-9623433">
    <property type="pathway name" value="NR1H2 &amp; NR1H3 regulate gene expression to control bile acid homeostasis"/>
</dbReference>
<dbReference type="PRO" id="PR:Q62685"/>
<dbReference type="Proteomes" id="UP000002494">
    <property type="component" value="Unplaced"/>
</dbReference>
<dbReference type="GO" id="GO:0000785">
    <property type="term" value="C:chromatin"/>
    <property type="evidence" value="ECO:0000266"/>
    <property type="project" value="RGD"/>
</dbReference>
<dbReference type="GO" id="GO:0005737">
    <property type="term" value="C:cytoplasm"/>
    <property type="evidence" value="ECO:0000266"/>
    <property type="project" value="RGD"/>
</dbReference>
<dbReference type="GO" id="GO:0005730">
    <property type="term" value="C:nucleolus"/>
    <property type="evidence" value="ECO:0000314"/>
    <property type="project" value="RGD"/>
</dbReference>
<dbReference type="GO" id="GO:0005634">
    <property type="term" value="C:nucleus"/>
    <property type="evidence" value="ECO:0000266"/>
    <property type="project" value="RGD"/>
</dbReference>
<dbReference type="GO" id="GO:0043235">
    <property type="term" value="C:receptor complex"/>
    <property type="evidence" value="ECO:0000266"/>
    <property type="project" value="RGD"/>
</dbReference>
<dbReference type="GO" id="GO:0090575">
    <property type="term" value="C:RNA polymerase II transcription regulator complex"/>
    <property type="evidence" value="ECO:0000266"/>
    <property type="project" value="RGD"/>
</dbReference>
<dbReference type="GO" id="GO:0031490">
    <property type="term" value="F:chromatin DNA binding"/>
    <property type="evidence" value="ECO:0000266"/>
    <property type="project" value="RGD"/>
</dbReference>
<dbReference type="GO" id="GO:0001228">
    <property type="term" value="F:DNA-binding transcription activator activity, RNA polymerase II-specific"/>
    <property type="evidence" value="ECO:0000266"/>
    <property type="project" value="RGD"/>
</dbReference>
<dbReference type="GO" id="GO:0003700">
    <property type="term" value="F:DNA-binding transcription factor activity"/>
    <property type="evidence" value="ECO:0000266"/>
    <property type="project" value="RGD"/>
</dbReference>
<dbReference type="GO" id="GO:0004879">
    <property type="term" value="F:nuclear receptor activity"/>
    <property type="evidence" value="ECO:0000250"/>
    <property type="project" value="UniProtKB"/>
</dbReference>
<dbReference type="GO" id="GO:0046965">
    <property type="term" value="F:nuclear retinoid X receptor binding"/>
    <property type="evidence" value="ECO:0000353"/>
    <property type="project" value="RGD"/>
</dbReference>
<dbReference type="GO" id="GO:0003707">
    <property type="term" value="F:nuclear steroid receptor activity"/>
    <property type="evidence" value="ECO:0000304"/>
    <property type="project" value="RGD"/>
</dbReference>
<dbReference type="GO" id="GO:0044877">
    <property type="term" value="F:protein-containing complex binding"/>
    <property type="evidence" value="ECO:0000314"/>
    <property type="project" value="RGD"/>
</dbReference>
<dbReference type="GO" id="GO:0000978">
    <property type="term" value="F:RNA polymerase II cis-regulatory region sequence-specific DNA binding"/>
    <property type="evidence" value="ECO:0000266"/>
    <property type="project" value="RGD"/>
</dbReference>
<dbReference type="GO" id="GO:0043565">
    <property type="term" value="F:sequence-specific DNA binding"/>
    <property type="evidence" value="ECO:0000314"/>
    <property type="project" value="RGD"/>
</dbReference>
<dbReference type="GO" id="GO:0032810">
    <property type="term" value="F:sterol response element binding"/>
    <property type="evidence" value="ECO:0000266"/>
    <property type="project" value="RGD"/>
</dbReference>
<dbReference type="GO" id="GO:0000976">
    <property type="term" value="F:transcription cis-regulatory region binding"/>
    <property type="evidence" value="ECO:0000266"/>
    <property type="project" value="RGD"/>
</dbReference>
<dbReference type="GO" id="GO:0008270">
    <property type="term" value="F:zinc ion binding"/>
    <property type="evidence" value="ECO:0007669"/>
    <property type="project" value="UniProtKB-KW"/>
</dbReference>
<dbReference type="GO" id="GO:0043277">
    <property type="term" value="P:apoptotic cell clearance"/>
    <property type="evidence" value="ECO:0000266"/>
    <property type="project" value="RGD"/>
</dbReference>
<dbReference type="GO" id="GO:0030154">
    <property type="term" value="P:cell differentiation"/>
    <property type="evidence" value="ECO:0000318"/>
    <property type="project" value="GO_Central"/>
</dbReference>
<dbReference type="GO" id="GO:0071222">
    <property type="term" value="P:cellular response to lipopolysaccharide"/>
    <property type="evidence" value="ECO:0000266"/>
    <property type="project" value="RGD"/>
</dbReference>
<dbReference type="GO" id="GO:0009267">
    <property type="term" value="P:cellular response to starvation"/>
    <property type="evidence" value="ECO:0000270"/>
    <property type="project" value="RGD"/>
</dbReference>
<dbReference type="GO" id="GO:0042632">
    <property type="term" value="P:cholesterol homeostasis"/>
    <property type="evidence" value="ECO:0000250"/>
    <property type="project" value="UniProtKB"/>
</dbReference>
<dbReference type="GO" id="GO:0048565">
    <property type="term" value="P:digestive tract development"/>
    <property type="evidence" value="ECO:0000270"/>
    <property type="project" value="RGD"/>
</dbReference>
<dbReference type="GO" id="GO:0009755">
    <property type="term" value="P:hormone-mediated signaling pathway"/>
    <property type="evidence" value="ECO:0000266"/>
    <property type="project" value="RGD"/>
</dbReference>
<dbReference type="GO" id="GO:0008286">
    <property type="term" value="P:insulin receptor signaling pathway"/>
    <property type="evidence" value="ECO:0000270"/>
    <property type="project" value="RGD"/>
</dbReference>
<dbReference type="GO" id="GO:0030522">
    <property type="term" value="P:intracellular receptor signaling pathway"/>
    <property type="evidence" value="ECO:0000318"/>
    <property type="project" value="GO_Central"/>
</dbReference>
<dbReference type="GO" id="GO:0055088">
    <property type="term" value="P:lipid homeostasis"/>
    <property type="evidence" value="ECO:0000266"/>
    <property type="project" value="RGD"/>
</dbReference>
<dbReference type="GO" id="GO:0006629">
    <property type="term" value="P:lipid metabolic process"/>
    <property type="evidence" value="ECO:0000266"/>
    <property type="project" value="RGD"/>
</dbReference>
<dbReference type="GO" id="GO:0001889">
    <property type="term" value="P:liver development"/>
    <property type="evidence" value="ECO:0000270"/>
    <property type="project" value="RGD"/>
</dbReference>
<dbReference type="GO" id="GO:0042789">
    <property type="term" value="P:mRNA transcription by RNA polymerase II"/>
    <property type="evidence" value="ECO:0000266"/>
    <property type="project" value="RGD"/>
</dbReference>
<dbReference type="GO" id="GO:0010887">
    <property type="term" value="P:negative regulation of cholesterol storage"/>
    <property type="evidence" value="ECO:0000266"/>
    <property type="project" value="RGD"/>
</dbReference>
<dbReference type="GO" id="GO:0120163">
    <property type="term" value="P:negative regulation of cold-induced thermogenesis"/>
    <property type="evidence" value="ECO:0000250"/>
    <property type="project" value="YuBioLab"/>
</dbReference>
<dbReference type="GO" id="GO:0045892">
    <property type="term" value="P:negative regulation of DNA-templated transcription"/>
    <property type="evidence" value="ECO:0000266"/>
    <property type="project" value="RGD"/>
</dbReference>
<dbReference type="GO" id="GO:0050728">
    <property type="term" value="P:negative regulation of inflammatory response"/>
    <property type="evidence" value="ECO:0000266"/>
    <property type="project" value="RGD"/>
</dbReference>
<dbReference type="GO" id="GO:0032369">
    <property type="term" value="P:negative regulation of lipid transport"/>
    <property type="evidence" value="ECO:0000266"/>
    <property type="project" value="RGD"/>
</dbReference>
<dbReference type="GO" id="GO:0043031">
    <property type="term" value="P:negative regulation of macrophage activation"/>
    <property type="evidence" value="ECO:0000266"/>
    <property type="project" value="RGD"/>
</dbReference>
<dbReference type="GO" id="GO:0090188">
    <property type="term" value="P:negative regulation of pancreatic juice secretion"/>
    <property type="evidence" value="ECO:0000266"/>
    <property type="project" value="RGD"/>
</dbReference>
<dbReference type="GO" id="GO:0048550">
    <property type="term" value="P:negative regulation of pinocytosis"/>
    <property type="evidence" value="ECO:0000266"/>
    <property type="project" value="RGD"/>
</dbReference>
<dbReference type="GO" id="GO:0045861">
    <property type="term" value="P:negative regulation of proteolysis"/>
    <property type="evidence" value="ECO:0000266"/>
    <property type="project" value="RGD"/>
</dbReference>
<dbReference type="GO" id="GO:1903573">
    <property type="term" value="P:negative regulation of response to endoplasmic reticulum stress"/>
    <property type="evidence" value="ECO:0000250"/>
    <property type="project" value="UniProtKB"/>
</dbReference>
<dbReference type="GO" id="GO:0090341">
    <property type="term" value="P:negative regulation of secretion of lysosomal enzymes"/>
    <property type="evidence" value="ECO:0000266"/>
    <property type="project" value="RGD"/>
</dbReference>
<dbReference type="GO" id="GO:0000122">
    <property type="term" value="P:negative regulation of transcription by RNA polymerase II"/>
    <property type="evidence" value="ECO:0000266"/>
    <property type="project" value="RGD"/>
</dbReference>
<dbReference type="GO" id="GO:0036151">
    <property type="term" value="P:phosphatidylcholine acyl-chain remodeling"/>
    <property type="evidence" value="ECO:0000250"/>
    <property type="project" value="UniProtKB"/>
</dbReference>
<dbReference type="GO" id="GO:0010875">
    <property type="term" value="P:positive regulation of cholesterol efflux"/>
    <property type="evidence" value="ECO:0000250"/>
    <property type="project" value="UniProtKB"/>
</dbReference>
<dbReference type="GO" id="GO:0032376">
    <property type="term" value="P:positive regulation of cholesterol transport"/>
    <property type="evidence" value="ECO:0000266"/>
    <property type="project" value="RGD"/>
</dbReference>
<dbReference type="GO" id="GO:0045893">
    <property type="term" value="P:positive regulation of DNA-templated transcription"/>
    <property type="evidence" value="ECO:0000250"/>
    <property type="project" value="UniProtKB"/>
</dbReference>
<dbReference type="GO" id="GO:0045723">
    <property type="term" value="P:positive regulation of fatty acid biosynthetic process"/>
    <property type="evidence" value="ECO:0000266"/>
    <property type="project" value="RGD"/>
</dbReference>
<dbReference type="GO" id="GO:0046889">
    <property type="term" value="P:positive regulation of lipid biosynthetic process"/>
    <property type="evidence" value="ECO:0000266"/>
    <property type="project" value="RGD"/>
</dbReference>
<dbReference type="GO" id="GO:0051247">
    <property type="term" value="P:positive regulation of protein metabolic process"/>
    <property type="evidence" value="ECO:0000266"/>
    <property type="project" value="RGD"/>
</dbReference>
<dbReference type="GO" id="GO:0034145">
    <property type="term" value="P:positive regulation of toll-like receptor 4 signaling pathway"/>
    <property type="evidence" value="ECO:0000266"/>
    <property type="project" value="RGD"/>
</dbReference>
<dbReference type="GO" id="GO:0045944">
    <property type="term" value="P:positive regulation of transcription by RNA polymerase II"/>
    <property type="evidence" value="ECO:0000250"/>
    <property type="project" value="UniProtKB"/>
</dbReference>
<dbReference type="GO" id="GO:0010867">
    <property type="term" value="P:positive regulation of triglyceride biosynthetic process"/>
    <property type="evidence" value="ECO:0000266"/>
    <property type="project" value="RGD"/>
</dbReference>
<dbReference type="GO" id="GO:0006355">
    <property type="term" value="P:regulation of DNA-templated transcription"/>
    <property type="evidence" value="ECO:0000266"/>
    <property type="project" value="RGD"/>
</dbReference>
<dbReference type="GO" id="GO:0019217">
    <property type="term" value="P:regulation of fatty acid metabolic process"/>
    <property type="evidence" value="ECO:0000315"/>
    <property type="project" value="RGD"/>
</dbReference>
<dbReference type="GO" id="GO:0010883">
    <property type="term" value="P:regulation of lipid storage"/>
    <property type="evidence" value="ECO:0000318"/>
    <property type="project" value="GO_Central"/>
</dbReference>
<dbReference type="GO" id="GO:0070723">
    <property type="term" value="P:response to cholesterol"/>
    <property type="evidence" value="ECO:0000270"/>
    <property type="project" value="RGD"/>
</dbReference>
<dbReference type="GO" id="GO:0031667">
    <property type="term" value="P:response to nutrient levels"/>
    <property type="evidence" value="ECO:0000270"/>
    <property type="project" value="RGD"/>
</dbReference>
<dbReference type="GO" id="GO:0032570">
    <property type="term" value="P:response to progesterone"/>
    <property type="evidence" value="ECO:0000266"/>
    <property type="project" value="RGD"/>
</dbReference>
<dbReference type="GO" id="GO:0048536">
    <property type="term" value="P:spleen development"/>
    <property type="evidence" value="ECO:0000270"/>
    <property type="project" value="RGD"/>
</dbReference>
<dbReference type="GO" id="GO:0055092">
    <property type="term" value="P:sterol homeostasis"/>
    <property type="evidence" value="ECO:0000266"/>
    <property type="project" value="RGD"/>
</dbReference>
<dbReference type="GO" id="GO:0048538">
    <property type="term" value="P:thymus development"/>
    <property type="evidence" value="ECO:0000270"/>
    <property type="project" value="RGD"/>
</dbReference>
<dbReference type="GO" id="GO:0070328">
    <property type="term" value="P:triglyceride homeostasis"/>
    <property type="evidence" value="ECO:0000266"/>
    <property type="project" value="RGD"/>
</dbReference>
<dbReference type="CDD" id="cd07160">
    <property type="entry name" value="NR_DBD_LXR"/>
    <property type="match status" value="1"/>
</dbReference>
<dbReference type="CDD" id="cd06954">
    <property type="entry name" value="NR_LBD_LXR"/>
    <property type="match status" value="1"/>
</dbReference>
<dbReference type="FunFam" id="1.10.565.10:FF:000014">
    <property type="entry name" value="Oxysterols receptor LXR-alpha isoform 1"/>
    <property type="match status" value="1"/>
</dbReference>
<dbReference type="FunFam" id="3.30.50.10:FF:000017">
    <property type="entry name" value="Oxysterols receptor LXR-alpha isoform 1"/>
    <property type="match status" value="1"/>
</dbReference>
<dbReference type="Gene3D" id="3.30.50.10">
    <property type="entry name" value="Erythroid Transcription Factor GATA-1, subunit A"/>
    <property type="match status" value="1"/>
</dbReference>
<dbReference type="Gene3D" id="1.10.565.10">
    <property type="entry name" value="Retinoid X Receptor"/>
    <property type="match status" value="1"/>
</dbReference>
<dbReference type="InterPro" id="IPR023257">
    <property type="entry name" value="Liver_X_rcpt"/>
</dbReference>
<dbReference type="InterPro" id="IPR035500">
    <property type="entry name" value="NHR-like_dom_sf"/>
</dbReference>
<dbReference type="InterPro" id="IPR000536">
    <property type="entry name" value="Nucl_hrmn_rcpt_lig-bd"/>
</dbReference>
<dbReference type="InterPro" id="IPR050234">
    <property type="entry name" value="Nuclear_hormone_rcpt_NR1"/>
</dbReference>
<dbReference type="InterPro" id="IPR001723">
    <property type="entry name" value="Nuclear_hrmn_rcpt"/>
</dbReference>
<dbReference type="InterPro" id="IPR001628">
    <property type="entry name" value="Znf_hrmn_rcpt"/>
</dbReference>
<dbReference type="InterPro" id="IPR013088">
    <property type="entry name" value="Znf_NHR/GATA"/>
</dbReference>
<dbReference type="PANTHER" id="PTHR24082">
    <property type="entry name" value="NUCLEAR HORMONE RECEPTOR"/>
    <property type="match status" value="1"/>
</dbReference>
<dbReference type="PANTHER" id="PTHR24082:SF259">
    <property type="entry name" value="OXYSTEROLS RECEPTOR LXR-ALPHA"/>
    <property type="match status" value="1"/>
</dbReference>
<dbReference type="Pfam" id="PF00104">
    <property type="entry name" value="Hormone_recep"/>
    <property type="match status" value="1"/>
</dbReference>
<dbReference type="Pfam" id="PF00105">
    <property type="entry name" value="zf-C4"/>
    <property type="match status" value="1"/>
</dbReference>
<dbReference type="PRINTS" id="PR02034">
    <property type="entry name" value="LIVERXRECPTR"/>
</dbReference>
<dbReference type="PRINTS" id="PR00398">
    <property type="entry name" value="STRDHORMONER"/>
</dbReference>
<dbReference type="PRINTS" id="PR00047">
    <property type="entry name" value="STROIDFINGER"/>
</dbReference>
<dbReference type="SMART" id="SM00430">
    <property type="entry name" value="HOLI"/>
    <property type="match status" value="1"/>
</dbReference>
<dbReference type="SMART" id="SM00399">
    <property type="entry name" value="ZnF_C4"/>
    <property type="match status" value="1"/>
</dbReference>
<dbReference type="SUPFAM" id="SSF57716">
    <property type="entry name" value="Glucocorticoid receptor-like (DNA-binding domain)"/>
    <property type="match status" value="1"/>
</dbReference>
<dbReference type="SUPFAM" id="SSF48508">
    <property type="entry name" value="Nuclear receptor ligand-binding domain"/>
    <property type="match status" value="1"/>
</dbReference>
<dbReference type="PROSITE" id="PS51843">
    <property type="entry name" value="NR_LBD"/>
    <property type="match status" value="1"/>
</dbReference>
<dbReference type="PROSITE" id="PS00031">
    <property type="entry name" value="NUCLEAR_REC_DBD_1"/>
    <property type="match status" value="1"/>
</dbReference>
<dbReference type="PROSITE" id="PS51030">
    <property type="entry name" value="NUCLEAR_REC_DBD_2"/>
    <property type="match status" value="1"/>
</dbReference>
<name>NR1H3_RAT</name>
<gene>
    <name type="primary">Nr1h3</name>
    <name type="synonym">Lxra</name>
</gene>
<protein>
    <recommendedName>
        <fullName>Oxysterols receptor LXR-alpha</fullName>
    </recommendedName>
    <alternativeName>
        <fullName>Liver X receptor alpha</fullName>
    </alternativeName>
    <alternativeName>
        <fullName>Nuclear receptor subfamily 1 group H member 3</fullName>
    </alternativeName>
    <alternativeName>
        <fullName>RLD-1</fullName>
    </alternativeName>
</protein>
<organism>
    <name type="scientific">Rattus norvegicus</name>
    <name type="common">Rat</name>
    <dbReference type="NCBI Taxonomy" id="10116"/>
    <lineage>
        <taxon>Eukaryota</taxon>
        <taxon>Metazoa</taxon>
        <taxon>Chordata</taxon>
        <taxon>Craniata</taxon>
        <taxon>Vertebrata</taxon>
        <taxon>Euteleostomi</taxon>
        <taxon>Mammalia</taxon>
        <taxon>Eutheria</taxon>
        <taxon>Euarchontoglires</taxon>
        <taxon>Glires</taxon>
        <taxon>Rodentia</taxon>
        <taxon>Myomorpha</taxon>
        <taxon>Muroidea</taxon>
        <taxon>Muridae</taxon>
        <taxon>Murinae</taxon>
        <taxon>Rattus</taxon>
    </lineage>
</organism>
<sequence length="445" mass="50555">MSLWLEAAVPDVSPDSATELWKTEPQDAGDQGGNTCILREEARMPQSTGGALRIGLESSEPTALLPRAETLPEPTELRPQKRKKGPAPKMLGNELCSVCGDKASAFHYNVLSCEGCKGFFRRSVIKGARYICHSGGHCPMDTYMRRKCQECRLRKCRHAGMREECVLSEEQIRLKKLKRQEEEQAQATSVSPRVSSPPQVLPQLSPEQLGMIEKLVAAQQQCNRRSFSDRLRVTPWPIAPDPQSREARQQRFAHFTELAIVSVQEIVDFAKQLPGFLQLSREDQIALLKTSAIEVMLLETSRRYNPGSESITFLKDFSYNREDFAKAGLQVEFINPIFEFSRSMNELQLNDAEFALLIAISIFSADRPNVQDQLQVERLQHTYVEALHAYVSINHPHDRLMFPRMLMKLVSLRTLSSVHSEQVFALRLQDKKLPPLLSEIWDVHE</sequence>
<proteinExistence type="evidence at protein level"/>
<accession>Q62685</accession>
<feature type="chain" id="PRO_0000053537" description="Oxysterols receptor LXR-alpha">
    <location>
        <begin position="1"/>
        <end position="445"/>
    </location>
</feature>
<feature type="domain" description="NR LBD" evidence="4">
    <location>
        <begin position="207"/>
        <end position="445"/>
    </location>
</feature>
<feature type="DNA-binding region" description="Nuclear receptor" evidence="3">
    <location>
        <begin position="93"/>
        <end position="168"/>
    </location>
</feature>
<feature type="zinc finger region" description="NR C4-type" evidence="3">
    <location>
        <begin position="96"/>
        <end position="116"/>
    </location>
</feature>
<feature type="zinc finger region" description="NR C4-type" evidence="3">
    <location>
        <begin position="132"/>
        <end position="156"/>
    </location>
</feature>
<feature type="region of interest" description="Transactivation AF-1; required for ligand-independent transactivation function" evidence="1">
    <location>
        <begin position="1"/>
        <end position="94"/>
    </location>
</feature>
<feature type="region of interest" description="Disordered" evidence="5">
    <location>
        <begin position="1"/>
        <end position="34"/>
    </location>
</feature>
<feature type="region of interest" description="Disordered" evidence="5">
    <location>
        <begin position="62"/>
        <end position="86"/>
    </location>
</feature>
<feature type="region of interest" description="Disordered" evidence="5">
    <location>
        <begin position="178"/>
        <end position="200"/>
    </location>
</feature>
<feature type="region of interest" description="Transactivation AF-2; required for ligand-dependent transactivation function; mediates interaction with CCAR2" evidence="1">
    <location>
        <begin position="203"/>
        <end position="445"/>
    </location>
</feature>
<feature type="compositionally biased region" description="Low complexity" evidence="5">
    <location>
        <begin position="189"/>
        <end position="200"/>
    </location>
</feature>
<feature type="modified residue" description="Phosphoserine" evidence="7">
    <location>
        <position position="191"/>
    </location>
</feature>
<reference key="1">
    <citation type="journal article" date="1994" name="Mol. Cell. Biol.">
        <title>A novel orphan receptor specific for a subset of thyroid hormone-responsive elements and its interaction with the retinoid/thyroid hormone receptor subfamily.</title>
        <authorList>
            <person name="Apfel R.H."/>
            <person name="Benbrook D."/>
            <person name="Lernhardt E."/>
            <person name="Ortiz M.A."/>
            <person name="Salbert G."/>
            <person name="Pfahl M."/>
        </authorList>
    </citation>
    <scope>NUCLEOTIDE SEQUENCE [MRNA]</scope>
    <source>
        <tissue>Liver</tissue>
    </source>
</reference>
<reference key="2">
    <citation type="journal article" date="2012" name="Nat. Commun.">
        <title>Quantitative maps of protein phosphorylation sites across 14 different rat organs and tissues.</title>
        <authorList>
            <person name="Lundby A."/>
            <person name="Secher A."/>
            <person name="Lage K."/>
            <person name="Nordsborg N.B."/>
            <person name="Dmytriyev A."/>
            <person name="Lundby C."/>
            <person name="Olsen J.V."/>
        </authorList>
    </citation>
    <scope>PHOSPHORYLATION [LARGE SCALE ANALYSIS] AT SER-191</scope>
    <scope>IDENTIFICATION BY MASS SPECTROMETRY [LARGE SCALE ANALYSIS]</scope>
</reference>
<comment type="function">
    <text evidence="1 2">Nuclear receptor that exhibits a ligand-dependent transcriptional activation activity. Interaction with retinoic acid receptor (RXR) shifts RXR from its role as a silent DNA-binding partner to an active ligand-binding subunit in mediating retinoid responses through target genes defined by LXRES. LXRES are DR4-type response elements characterized by direct repeats of two similar hexanuclotide half-sites spaced by four nucleotides. Plays an important role in the regulation of cholesterol homeostasis, regulating cholesterol uptake through MYLIP-dependent ubiquitination of LDLR, VLDLR and LRP8. Interplays functionally with RORA for the regulation of genes involved in liver metabolism (By similarity). Induces LPCAT3-dependent phospholipid remodeling in endoplasmic reticulum (ER) membranes of hepatocytes, driving SREBF1 processing and lipogenesis (By similarity). Via LPCAT3, triggers the incorporation of arachidonate into phosphatidylcholines of ER membranes, increasing membrane dynamics and enabling triacylglycerols transfer to nascent very low-density lipoprotein (VLDL) particles (By similarity). Via LPCAT3 also counteracts lipid-induced ER stress response and inflammation, likely by modulating SRC kinase membrane compartmentalization and limiting the synthesis of lipid inflammatory mediators (By similarity).</text>
</comment>
<comment type="subunit">
    <text evidence="1">Heterodimer of NR1H3 and RXR (retinoic acid receptor). Interacts with CCAR2 (via N-terminus) in a ligand-independent manner. Interacts with SIRT1 and this interaction is inhibited by CCAR2.</text>
</comment>
<comment type="subcellular location">
    <subcellularLocation>
        <location evidence="2 3">Nucleus</location>
    </subcellularLocation>
    <subcellularLocation>
        <location evidence="2">Cytoplasm</location>
    </subcellularLocation>
</comment>
<comment type="tissue specificity">
    <text>In adults it is expressed in spleen, pituitary, lung, liver, and fat. Weaker expression is observed in several other tissues.</text>
</comment>
<comment type="PTM">
    <text evidence="1">Ubiquitinated by UBR5, leading to its degradation: UBR5 specifically recognizes and binds ligand-bound NR1H3 when it is not associated with coactivators (NCOAs). In presence of NCOAs, the UBR5-degron is not accessible, preventing its ubiquitination and degradation.</text>
</comment>
<comment type="similarity">
    <text evidence="6">Belongs to the nuclear hormone receptor family. NR1 subfamily.</text>
</comment>
<evidence type="ECO:0000250" key="1">
    <source>
        <dbReference type="UniProtKB" id="Q13133"/>
    </source>
</evidence>
<evidence type="ECO:0000250" key="2">
    <source>
        <dbReference type="UniProtKB" id="Q9Z0Y9"/>
    </source>
</evidence>
<evidence type="ECO:0000255" key="3">
    <source>
        <dbReference type="PROSITE-ProRule" id="PRU00407"/>
    </source>
</evidence>
<evidence type="ECO:0000255" key="4">
    <source>
        <dbReference type="PROSITE-ProRule" id="PRU01189"/>
    </source>
</evidence>
<evidence type="ECO:0000256" key="5">
    <source>
        <dbReference type="SAM" id="MobiDB-lite"/>
    </source>
</evidence>
<evidence type="ECO:0000305" key="6"/>
<evidence type="ECO:0007744" key="7">
    <source>
    </source>
</evidence>